<name>RPOB_STRGC</name>
<feature type="chain" id="PRO_1000086387" description="DNA-directed RNA polymerase subunit beta">
    <location>
        <begin position="1"/>
        <end position="1188"/>
    </location>
</feature>
<comment type="function">
    <text evidence="1">DNA-dependent RNA polymerase catalyzes the transcription of DNA into RNA using the four ribonucleoside triphosphates as substrates.</text>
</comment>
<comment type="catalytic activity">
    <reaction evidence="1">
        <text>RNA(n) + a ribonucleoside 5'-triphosphate = RNA(n+1) + diphosphate</text>
        <dbReference type="Rhea" id="RHEA:21248"/>
        <dbReference type="Rhea" id="RHEA-COMP:14527"/>
        <dbReference type="Rhea" id="RHEA-COMP:17342"/>
        <dbReference type="ChEBI" id="CHEBI:33019"/>
        <dbReference type="ChEBI" id="CHEBI:61557"/>
        <dbReference type="ChEBI" id="CHEBI:140395"/>
        <dbReference type="EC" id="2.7.7.6"/>
    </reaction>
</comment>
<comment type="subunit">
    <text evidence="1">The RNAP catalytic core consists of 2 alpha, 1 beta, 1 beta' and 1 omega subunit. When a sigma factor is associated with the core the holoenzyme is formed, which can initiate transcription.</text>
</comment>
<comment type="similarity">
    <text evidence="1">Belongs to the RNA polymerase beta chain family.</text>
</comment>
<dbReference type="EC" id="2.7.7.6" evidence="1"/>
<dbReference type="EMBL" id="CP000725">
    <property type="protein sequence ID" value="ABV10072.1"/>
    <property type="molecule type" value="Genomic_DNA"/>
</dbReference>
<dbReference type="RefSeq" id="WP_012130944.1">
    <property type="nucleotide sequence ID" value="NC_009785.1"/>
</dbReference>
<dbReference type="SMR" id="A8AZI3"/>
<dbReference type="STRING" id="467705.SGO_1927"/>
<dbReference type="KEGG" id="sgo:SGO_1927"/>
<dbReference type="eggNOG" id="COG0085">
    <property type="taxonomic scope" value="Bacteria"/>
</dbReference>
<dbReference type="HOGENOM" id="CLU_000524_4_1_9"/>
<dbReference type="Proteomes" id="UP000001131">
    <property type="component" value="Chromosome"/>
</dbReference>
<dbReference type="GO" id="GO:0000428">
    <property type="term" value="C:DNA-directed RNA polymerase complex"/>
    <property type="evidence" value="ECO:0007669"/>
    <property type="project" value="UniProtKB-KW"/>
</dbReference>
<dbReference type="GO" id="GO:0003677">
    <property type="term" value="F:DNA binding"/>
    <property type="evidence" value="ECO:0007669"/>
    <property type="project" value="UniProtKB-UniRule"/>
</dbReference>
<dbReference type="GO" id="GO:0003899">
    <property type="term" value="F:DNA-directed RNA polymerase activity"/>
    <property type="evidence" value="ECO:0007669"/>
    <property type="project" value="UniProtKB-UniRule"/>
</dbReference>
<dbReference type="GO" id="GO:0032549">
    <property type="term" value="F:ribonucleoside binding"/>
    <property type="evidence" value="ECO:0007669"/>
    <property type="project" value="InterPro"/>
</dbReference>
<dbReference type="GO" id="GO:0006351">
    <property type="term" value="P:DNA-templated transcription"/>
    <property type="evidence" value="ECO:0007669"/>
    <property type="project" value="UniProtKB-UniRule"/>
</dbReference>
<dbReference type="CDD" id="cd00653">
    <property type="entry name" value="RNA_pol_B_RPB2"/>
    <property type="match status" value="1"/>
</dbReference>
<dbReference type="Gene3D" id="2.40.50.100">
    <property type="match status" value="1"/>
</dbReference>
<dbReference type="Gene3D" id="2.40.50.150">
    <property type="match status" value="1"/>
</dbReference>
<dbReference type="Gene3D" id="3.90.1100.10">
    <property type="match status" value="3"/>
</dbReference>
<dbReference type="Gene3D" id="2.40.270.10">
    <property type="entry name" value="DNA-directed RNA polymerase, subunit 2, domain 6"/>
    <property type="match status" value="1"/>
</dbReference>
<dbReference type="Gene3D" id="3.90.1800.10">
    <property type="entry name" value="RNA polymerase alpha subunit dimerisation domain"/>
    <property type="match status" value="1"/>
</dbReference>
<dbReference type="Gene3D" id="3.90.1110.10">
    <property type="entry name" value="RNA polymerase Rpb2, domain 2"/>
    <property type="match status" value="1"/>
</dbReference>
<dbReference type="HAMAP" id="MF_01321">
    <property type="entry name" value="RNApol_bact_RpoB"/>
    <property type="match status" value="1"/>
</dbReference>
<dbReference type="InterPro" id="IPR019462">
    <property type="entry name" value="DNA-dir_RNA_pol_bsu_external_1"/>
</dbReference>
<dbReference type="InterPro" id="IPR015712">
    <property type="entry name" value="DNA-dir_RNA_pol_su2"/>
</dbReference>
<dbReference type="InterPro" id="IPR007120">
    <property type="entry name" value="DNA-dir_RNAP_su2_dom"/>
</dbReference>
<dbReference type="InterPro" id="IPR037033">
    <property type="entry name" value="DNA-dir_RNAP_su2_hyb_sf"/>
</dbReference>
<dbReference type="InterPro" id="IPR010243">
    <property type="entry name" value="RNA_pol_bsu_bac"/>
</dbReference>
<dbReference type="InterPro" id="IPR007121">
    <property type="entry name" value="RNA_pol_bsu_CS"/>
</dbReference>
<dbReference type="InterPro" id="IPR007644">
    <property type="entry name" value="RNA_pol_bsu_protrusion"/>
</dbReference>
<dbReference type="InterPro" id="IPR007642">
    <property type="entry name" value="RNA_pol_Rpb2_2"/>
</dbReference>
<dbReference type="InterPro" id="IPR037034">
    <property type="entry name" value="RNA_pol_Rpb2_2_sf"/>
</dbReference>
<dbReference type="InterPro" id="IPR007645">
    <property type="entry name" value="RNA_pol_Rpb2_3"/>
</dbReference>
<dbReference type="InterPro" id="IPR007641">
    <property type="entry name" value="RNA_pol_Rpb2_7"/>
</dbReference>
<dbReference type="InterPro" id="IPR014724">
    <property type="entry name" value="RNA_pol_RPB2_OB-fold"/>
</dbReference>
<dbReference type="NCBIfam" id="NF001616">
    <property type="entry name" value="PRK00405.1"/>
    <property type="match status" value="1"/>
</dbReference>
<dbReference type="NCBIfam" id="TIGR02013">
    <property type="entry name" value="rpoB"/>
    <property type="match status" value="1"/>
</dbReference>
<dbReference type="PANTHER" id="PTHR20856">
    <property type="entry name" value="DNA-DIRECTED RNA POLYMERASE I SUBUNIT 2"/>
    <property type="match status" value="1"/>
</dbReference>
<dbReference type="Pfam" id="PF04563">
    <property type="entry name" value="RNA_pol_Rpb2_1"/>
    <property type="match status" value="1"/>
</dbReference>
<dbReference type="Pfam" id="PF04561">
    <property type="entry name" value="RNA_pol_Rpb2_2"/>
    <property type="match status" value="2"/>
</dbReference>
<dbReference type="Pfam" id="PF04565">
    <property type="entry name" value="RNA_pol_Rpb2_3"/>
    <property type="match status" value="1"/>
</dbReference>
<dbReference type="Pfam" id="PF10385">
    <property type="entry name" value="RNA_pol_Rpb2_45"/>
    <property type="match status" value="1"/>
</dbReference>
<dbReference type="Pfam" id="PF00562">
    <property type="entry name" value="RNA_pol_Rpb2_6"/>
    <property type="match status" value="1"/>
</dbReference>
<dbReference type="Pfam" id="PF04560">
    <property type="entry name" value="RNA_pol_Rpb2_7"/>
    <property type="match status" value="1"/>
</dbReference>
<dbReference type="SUPFAM" id="SSF64484">
    <property type="entry name" value="beta and beta-prime subunits of DNA dependent RNA-polymerase"/>
    <property type="match status" value="1"/>
</dbReference>
<dbReference type="PROSITE" id="PS01166">
    <property type="entry name" value="RNA_POL_BETA"/>
    <property type="match status" value="1"/>
</dbReference>
<reference key="1">
    <citation type="journal article" date="2007" name="J. Bacteriol.">
        <title>Genome-wide transcriptional changes in Streptococcus gordonii in response to competence signaling peptide.</title>
        <authorList>
            <person name="Vickerman M.M."/>
            <person name="Iobst S."/>
            <person name="Jesionowski A.M."/>
            <person name="Gill S.R."/>
        </authorList>
    </citation>
    <scope>NUCLEOTIDE SEQUENCE [LARGE SCALE GENOMIC DNA]</scope>
    <source>
        <strain>Challis / ATCC 35105 / BCRC 15272 / CH1 / DL1 / V288</strain>
    </source>
</reference>
<sequence>MAGHDVQYGKHRTRRSFSRIKEVLDLPNLIEIQTDSFKDFLDHGLKEVFEDVLPISNFTDTMELEFVGYEIREPKYTLEEARIHDASYSAPIFVTFRLINKETGEIKTQEVFFGDFPIMTEMGTFIINGGERIIVSQLVRSPGVYFNDKVDKNGKIGYGSTVIPNRGAWLELETDSKDIAYTRIDRTRKIPFTTLVRALGFSGDDEIFDIFGDSDLVRNTIEKDIHKNPMDSRTDEALKEIYERLRPGEPKTAESSRSLLVARFFDPHRYDLAAVGRYKINKKLNIKTRLLNQTIAEPLVDAETGEILVEAGTLMTRSVIDSIAEQLDNGLNKITYIPNDSAVLTEPVELQKFKVVAPTDPDRVVTIIGNANPSDKVRTVTPADILAEMSYFLNLAEGIGRVDDIDHLGNRRIRAVGELLANQVRLGLSRMERNVRERMSVQDNEVLTPQQIINIRPVTAAIKEFFGSSQLSQFMDQHNPLSELSHKRRLSALGPGGLTRDRAGYEVRDVHYTHYGRMCPIETPEGPNIGLINNLSSYGHLNKYGFIQTPYRKVDREAGVVTNEIVWLTADEEDEFIVAQANSKLNEEGGFAEPIVMGRHQGNNQEFPSDQVDYMDVSPKQVVAVATACIPFLENDDSNRALMGANMQRQAVPLIDPKAPYVGTGMEYQAAHDSGAAVIAQHDGKVTYADADKVEVRREDGSLDVYHIQKFRRSNSGTAYNQRTLVKVGDVVEKGDFIADGPSMENGEMALGQNPIVAYMTWEGYNFEDAVIMSERLVKDDVYTSVHLEEYESETRDTKLGPEEITREIPNVGEDALRNLDEMGIIRIGAEVKEGDILVGKVTPKGEKDLSAEERLLHAIFGDKSREVRDTSLRVPHGADGVVRDVKIFTRANGDELQSGVNMLVRVYIAQKRKIKVGDKMAGRHGNKGVVSRIVPVEDMPYLPDGTPVDIMLNPLGVPSRMNIGQVMELHLGMAARNLGIHIATPVFDGASSDDLWDTVREAGMDSDAKTVLYDGRTGEPFDNRVSVGVMYMIKLHHMVDDKLHARSVGPYSMVTQQPLGGKAQFGGQRFGEMEVWALEAYGASNVLQEILTYKSDDVNGRLKAYEAITKGKPIPKPGVPESFRVLVKELQSLGLDMRVLDEDDNEVELRDLDEGEDDDVIHVDDLEKAREKAAQEAKAAFEAEGKE</sequence>
<evidence type="ECO:0000255" key="1">
    <source>
        <dbReference type="HAMAP-Rule" id="MF_01321"/>
    </source>
</evidence>
<gene>
    <name evidence="1" type="primary">rpoB</name>
    <name type="ordered locus">SGO_1927</name>
</gene>
<protein>
    <recommendedName>
        <fullName evidence="1">DNA-directed RNA polymerase subunit beta</fullName>
        <shortName evidence="1">RNAP subunit beta</shortName>
        <ecNumber evidence="1">2.7.7.6</ecNumber>
    </recommendedName>
    <alternativeName>
        <fullName evidence="1">RNA polymerase subunit beta</fullName>
    </alternativeName>
    <alternativeName>
        <fullName evidence="1">Transcriptase subunit beta</fullName>
    </alternativeName>
</protein>
<organism>
    <name type="scientific">Streptococcus gordonii (strain Challis / ATCC 35105 / BCRC 15272 / CH1 / DL1 / V288)</name>
    <dbReference type="NCBI Taxonomy" id="467705"/>
    <lineage>
        <taxon>Bacteria</taxon>
        <taxon>Bacillati</taxon>
        <taxon>Bacillota</taxon>
        <taxon>Bacilli</taxon>
        <taxon>Lactobacillales</taxon>
        <taxon>Streptococcaceae</taxon>
        <taxon>Streptococcus</taxon>
    </lineage>
</organism>
<keyword id="KW-0240">DNA-directed RNA polymerase</keyword>
<keyword id="KW-0548">Nucleotidyltransferase</keyword>
<keyword id="KW-1185">Reference proteome</keyword>
<keyword id="KW-0804">Transcription</keyword>
<keyword id="KW-0808">Transferase</keyword>
<accession>A8AZI3</accession>
<proteinExistence type="inferred from homology"/>